<evidence type="ECO:0000250" key="1"/>
<evidence type="ECO:0000250" key="2">
    <source>
        <dbReference type="UniProtKB" id="D5ARP7"/>
    </source>
</evidence>
<evidence type="ECO:0000250" key="3">
    <source>
        <dbReference type="UniProtKB" id="Q52689"/>
    </source>
</evidence>
<evidence type="ECO:0000250" key="4">
    <source>
        <dbReference type="UniProtKB" id="Q8KS19"/>
    </source>
</evidence>
<evidence type="ECO:0000255" key="5"/>
<evidence type="ECO:0000255" key="6">
    <source>
        <dbReference type="PROSITE-ProRule" id="PRU00433"/>
    </source>
</evidence>
<evidence type="ECO:0000269" key="7">
    <source>
    </source>
</evidence>
<evidence type="ECO:0000305" key="8"/>
<evidence type="ECO:0000312" key="9">
    <source>
        <dbReference type="EMBL" id="ADJ00002.1"/>
    </source>
</evidence>
<evidence type="ECO:0000312" key="10">
    <source>
        <dbReference type="PDB" id="3MK7"/>
    </source>
</evidence>
<evidence type="ECO:0007829" key="11">
    <source>
        <dbReference type="PDB" id="3MK7"/>
    </source>
</evidence>
<name>CCOP1_STUST</name>
<accession>D9IA45</accession>
<proteinExistence type="evidence at protein level"/>
<keyword id="KW-0002">3D-structure</keyword>
<keyword id="KW-0997">Cell inner membrane</keyword>
<keyword id="KW-1003">Cell membrane</keyword>
<keyword id="KW-0903">Direct protein sequencing</keyword>
<keyword id="KW-0249">Electron transport</keyword>
<keyword id="KW-0349">Heme</keyword>
<keyword id="KW-0375">Hydrogen ion transport</keyword>
<keyword id="KW-0406">Ion transport</keyword>
<keyword id="KW-0408">Iron</keyword>
<keyword id="KW-0472">Membrane</keyword>
<keyword id="KW-0479">Metal-binding</keyword>
<keyword id="KW-0560">Oxidoreductase</keyword>
<keyword id="KW-0677">Repeat</keyword>
<keyword id="KW-0679">Respiratory chain</keyword>
<keyword id="KW-0812">Transmembrane</keyword>
<keyword id="KW-1133">Transmembrane helix</keyword>
<keyword id="KW-0813">Transport</keyword>
<organism>
    <name type="scientific">Stutzerimonas stutzeri</name>
    <name type="common">Pseudomonas stutzeri</name>
    <dbReference type="NCBI Taxonomy" id="316"/>
    <lineage>
        <taxon>Bacteria</taxon>
        <taxon>Pseudomonadati</taxon>
        <taxon>Pseudomonadota</taxon>
        <taxon>Gammaproteobacteria</taxon>
        <taxon>Pseudomonadales</taxon>
        <taxon>Pseudomonadaceae</taxon>
        <taxon>Stutzerimonas</taxon>
    </lineage>
</organism>
<comment type="function">
    <text evidence="1">C-type cytochrome. Part of the cbb3-type cytochrome c oxidase complex. CcoP subunit is required for transferring electrons from donor cytochrome c via its heme groups to CcoO subunit. From there, electrons are shuttled to the catalytic binuclear center of CcoN subunit where oxygen reduction takes place. The complex also functions as a proton pump (By similarity).</text>
</comment>
<comment type="cofactor">
    <cofactor evidence="7">
        <name>heme c</name>
        <dbReference type="ChEBI" id="CHEBI:61717"/>
    </cofactor>
    <text evidence="7">Binds 2 heme C groups per subunit.</text>
</comment>
<comment type="pathway">
    <text evidence="2">Energy metabolism; oxidative phosphorylation.</text>
</comment>
<comment type="subunit">
    <text evidence="7">Component of the cbb3-type cytochrome c oxidase at least composed of CcoN, CcoO, CcoQ and CcoP.</text>
</comment>
<comment type="subcellular location">
    <subcellularLocation>
        <location evidence="4 5">Cell inner membrane</location>
        <topology evidence="4 5">Multi-pass membrane protein</topology>
    </subcellularLocation>
</comment>
<comment type="similarity">
    <text evidence="8">Belongs to the CcoP / FixP family.</text>
</comment>
<feature type="chain" id="PRO_0000412288" description="Cbb3-type cytochrome c oxidase subunit CcoP1">
    <location>
        <begin position="1"/>
        <end position="311"/>
    </location>
</feature>
<feature type="transmembrane region" description="Helical" evidence="7">
    <location>
        <begin position="4"/>
        <end position="24"/>
    </location>
</feature>
<feature type="transmembrane region" description="Helical" evidence="7">
    <location>
        <begin position="56"/>
        <end position="76"/>
    </location>
</feature>
<feature type="domain" description="Cytochrome c 1" evidence="6">
    <location>
        <begin position="130"/>
        <end position="209"/>
    </location>
</feature>
<feature type="domain" description="Cytochrome c 2" evidence="6">
    <location>
        <begin position="220"/>
        <end position="302"/>
    </location>
</feature>
<feature type="binding site" description="covalent" evidence="7">
    <location>
        <position position="143"/>
    </location>
    <ligand>
        <name>heme c</name>
        <dbReference type="ChEBI" id="CHEBI:61717"/>
        <label>1</label>
    </ligand>
</feature>
<feature type="binding site" description="covalent" evidence="7">
    <location>
        <position position="146"/>
    </location>
    <ligand>
        <name>heme c</name>
        <dbReference type="ChEBI" id="CHEBI:61717"/>
        <label>1</label>
    </ligand>
</feature>
<feature type="binding site" description="axial binding residue" evidence="7">
    <location>
        <position position="147"/>
    </location>
    <ligand>
        <name>heme c</name>
        <dbReference type="ChEBI" id="CHEBI:61717"/>
        <label>1</label>
    </ligand>
    <ligandPart>
        <name>Fe</name>
        <dbReference type="ChEBI" id="CHEBI:18248"/>
    </ligandPart>
</feature>
<feature type="binding site" description="axial binding residue" evidence="7">
    <location>
        <position position="186"/>
    </location>
    <ligand>
        <name>heme c</name>
        <dbReference type="ChEBI" id="CHEBI:61717"/>
        <label>2</label>
    </ligand>
    <ligandPart>
        <name>Fe</name>
        <dbReference type="ChEBI" id="CHEBI:18248"/>
    </ligandPart>
</feature>
<feature type="binding site" description="covalent" evidence="7">
    <location>
        <position position="233"/>
    </location>
    <ligand>
        <name>heme c</name>
        <dbReference type="ChEBI" id="CHEBI:61717"/>
        <label>2</label>
    </ligand>
</feature>
<feature type="binding site" description="covalent" evidence="7">
    <location>
        <position position="236"/>
    </location>
    <ligand>
        <name>heme c</name>
        <dbReference type="ChEBI" id="CHEBI:61717"/>
        <label>2</label>
    </ligand>
</feature>
<feature type="binding site" description="axial binding residue" evidence="7">
    <location>
        <position position="237"/>
    </location>
    <ligand>
        <name>heme c</name>
        <dbReference type="ChEBI" id="CHEBI:61717"/>
        <label>2</label>
    </ligand>
    <ligandPart>
        <name>Fe</name>
        <dbReference type="ChEBI" id="CHEBI:18248"/>
    </ligandPart>
</feature>
<feature type="binding site" description="axial binding residue" evidence="7">
    <location>
        <position position="279"/>
    </location>
    <ligand>
        <name>heme c</name>
        <dbReference type="ChEBI" id="CHEBI:61717"/>
        <label>1</label>
    </ligand>
    <ligandPart>
        <name>Fe</name>
        <dbReference type="ChEBI" id="CHEBI:18248"/>
    </ligandPart>
</feature>
<feature type="helix" evidence="11">
    <location>
        <begin position="3"/>
        <end position="26"/>
    </location>
</feature>
<feature type="turn" evidence="11">
    <location>
        <begin position="27"/>
        <end position="30"/>
    </location>
</feature>
<feature type="helix" evidence="11">
    <location>
        <begin position="56"/>
        <end position="75"/>
    </location>
</feature>
<feature type="helix" evidence="11">
    <location>
        <begin position="95"/>
        <end position="118"/>
    </location>
</feature>
<feature type="helix" evidence="11">
    <location>
        <begin position="122"/>
        <end position="126"/>
    </location>
</feature>
<feature type="helix" evidence="11">
    <location>
        <begin position="129"/>
        <end position="142"/>
    </location>
</feature>
<feature type="helix" evidence="11">
    <location>
        <begin position="144"/>
        <end position="147"/>
    </location>
</feature>
<feature type="strand" evidence="11">
    <location>
        <begin position="160"/>
        <end position="163"/>
    </location>
</feature>
<feature type="helix" evidence="11">
    <location>
        <begin position="171"/>
        <end position="180"/>
    </location>
</feature>
<feature type="helix" evidence="11">
    <location>
        <begin position="190"/>
        <end position="193"/>
    </location>
</feature>
<feature type="helix" evidence="11">
    <location>
        <begin position="195"/>
        <end position="207"/>
    </location>
</feature>
<feature type="turn" evidence="11">
    <location>
        <begin position="208"/>
        <end position="210"/>
    </location>
</feature>
<feature type="helix" evidence="11">
    <location>
        <begin position="222"/>
        <end position="231"/>
    </location>
</feature>
<feature type="helix" evidence="11">
    <location>
        <begin position="234"/>
        <end position="237"/>
    </location>
</feature>
<feature type="turn" evidence="11">
    <location>
        <begin position="245"/>
        <end position="248"/>
    </location>
</feature>
<feature type="helix" evidence="11">
    <location>
        <begin position="255"/>
        <end position="257"/>
    </location>
</feature>
<feature type="helix" evidence="11">
    <location>
        <begin position="264"/>
        <end position="273"/>
    </location>
</feature>
<feature type="turn" evidence="11">
    <location>
        <begin position="283"/>
        <end position="286"/>
    </location>
</feature>
<feature type="helix" evidence="11">
    <location>
        <begin position="287"/>
        <end position="301"/>
    </location>
</feature>
<dbReference type="EMBL" id="HM130676">
    <property type="protein sequence ID" value="ADJ00002.1"/>
    <property type="molecule type" value="Genomic_DNA"/>
</dbReference>
<dbReference type="RefSeq" id="WP_003285277.1">
    <property type="nucleotide sequence ID" value="NZ_CP036186.1"/>
</dbReference>
<dbReference type="PDB" id="3MK7">
    <property type="method" value="X-ray"/>
    <property type="resolution" value="3.20 A"/>
    <property type="chains" value="C/F/I/M=1-311"/>
</dbReference>
<dbReference type="PDB" id="5DJQ">
    <property type="method" value="X-ray"/>
    <property type="resolution" value="3.20 A"/>
    <property type="chains" value="C/F/I/M=1-311"/>
</dbReference>
<dbReference type="PDBsum" id="3MK7"/>
<dbReference type="PDBsum" id="5DJQ"/>
<dbReference type="SMR" id="D9IA45"/>
<dbReference type="TCDB" id="3.D.4.3.3">
    <property type="family name" value="the proton-translocating cytochrome oxidase (cox) superfamily"/>
</dbReference>
<dbReference type="UniPathway" id="UPA00705"/>
<dbReference type="EvolutionaryTrace" id="D9IA45"/>
<dbReference type="GO" id="GO:0070069">
    <property type="term" value="C:cytochrome complex"/>
    <property type="evidence" value="ECO:0000314"/>
    <property type="project" value="UniProtKB"/>
</dbReference>
<dbReference type="GO" id="GO:0005886">
    <property type="term" value="C:plasma membrane"/>
    <property type="evidence" value="ECO:0007669"/>
    <property type="project" value="UniProtKB-SubCell"/>
</dbReference>
<dbReference type="GO" id="GO:0009055">
    <property type="term" value="F:electron transfer activity"/>
    <property type="evidence" value="ECO:0007669"/>
    <property type="project" value="InterPro"/>
</dbReference>
<dbReference type="GO" id="GO:0020037">
    <property type="term" value="F:heme binding"/>
    <property type="evidence" value="ECO:0007669"/>
    <property type="project" value="InterPro"/>
</dbReference>
<dbReference type="GO" id="GO:0046872">
    <property type="term" value="F:metal ion binding"/>
    <property type="evidence" value="ECO:0007669"/>
    <property type="project" value="UniProtKB-KW"/>
</dbReference>
<dbReference type="GO" id="GO:0016491">
    <property type="term" value="F:oxidoreductase activity"/>
    <property type="evidence" value="ECO:0007669"/>
    <property type="project" value="UniProtKB-KW"/>
</dbReference>
<dbReference type="GO" id="GO:0006119">
    <property type="term" value="P:oxidative phosphorylation"/>
    <property type="evidence" value="ECO:0007669"/>
    <property type="project" value="UniProtKB-UniPathway"/>
</dbReference>
<dbReference type="GO" id="GO:1902600">
    <property type="term" value="P:proton transmembrane transport"/>
    <property type="evidence" value="ECO:0007669"/>
    <property type="project" value="UniProtKB-KW"/>
</dbReference>
<dbReference type="FunFam" id="1.10.760.10:FF:000013">
    <property type="entry name" value="Cbb3-type cytochrome c oxidase subunit"/>
    <property type="match status" value="1"/>
</dbReference>
<dbReference type="FunFam" id="1.10.760.10:FF:000015">
    <property type="entry name" value="Cbb3-type cytochrome c oxidase subunit"/>
    <property type="match status" value="1"/>
</dbReference>
<dbReference type="Gene3D" id="6.10.280.130">
    <property type="match status" value="1"/>
</dbReference>
<dbReference type="Gene3D" id="1.10.760.10">
    <property type="entry name" value="Cytochrome c-like domain"/>
    <property type="match status" value="2"/>
</dbReference>
<dbReference type="InterPro" id="IPR032858">
    <property type="entry name" value="CcoP_N"/>
</dbReference>
<dbReference type="InterPro" id="IPR038414">
    <property type="entry name" value="CcoP_N_sf"/>
</dbReference>
<dbReference type="InterPro" id="IPR009056">
    <property type="entry name" value="Cyt_c-like_dom"/>
</dbReference>
<dbReference type="InterPro" id="IPR036909">
    <property type="entry name" value="Cyt_c-like_dom_sf"/>
</dbReference>
<dbReference type="InterPro" id="IPR004678">
    <property type="entry name" value="Cyt_c_oxidase_cbb3_su3"/>
</dbReference>
<dbReference type="InterPro" id="IPR050597">
    <property type="entry name" value="Cytochrome_c_Oxidase_Subunit"/>
</dbReference>
<dbReference type="NCBIfam" id="TIGR00782">
    <property type="entry name" value="ccoP"/>
    <property type="match status" value="1"/>
</dbReference>
<dbReference type="PANTHER" id="PTHR33751">
    <property type="entry name" value="CBB3-TYPE CYTOCHROME C OXIDASE SUBUNIT FIXP"/>
    <property type="match status" value="1"/>
</dbReference>
<dbReference type="PANTHER" id="PTHR33751:SF1">
    <property type="entry name" value="CBB3-TYPE CYTOCHROME C OXIDASE SUBUNIT FIXP"/>
    <property type="match status" value="1"/>
</dbReference>
<dbReference type="Pfam" id="PF13442">
    <property type="entry name" value="Cytochrome_CBB3"/>
    <property type="match status" value="2"/>
</dbReference>
<dbReference type="Pfam" id="PF14715">
    <property type="entry name" value="FixP_N"/>
    <property type="match status" value="1"/>
</dbReference>
<dbReference type="PIRSF" id="PIRSF000006">
    <property type="entry name" value="Cbb3-Cox_fixP"/>
    <property type="match status" value="1"/>
</dbReference>
<dbReference type="SUPFAM" id="SSF46626">
    <property type="entry name" value="Cytochrome c"/>
    <property type="match status" value="2"/>
</dbReference>
<dbReference type="PROSITE" id="PS51007">
    <property type="entry name" value="CYTC"/>
    <property type="match status" value="2"/>
</dbReference>
<sequence>MSTFWSGYIALLTLGTIVALFWLIFATRKGESAGTTDQTMGHAFDGIEEYDNPLPRWWFLLFIGTLVFGILYLVLYPGLGNWKGVLPGYEGGWTQEKQWEREVAQADEKYGPIFAKYAAMSVEEVAQDPQAVKMGARLFANYCSICHGSDAKGSLGFPNLADQDWRWGGDAASIKTSILNGRIAAMPAWGQAIGEEGVKNVAAFVRKDLAGLPLPEGTDADLSAGKNVYAQTCAVCHGQGGEGMAALGAPKLNSAAGWIYGSSLGQLQQTIRHGRNGQMPAQQQYLGDDKVHLLAAYVYSLSQKPEQLANQ</sequence>
<gene>
    <name evidence="9" type="primary">ccoP1</name>
</gene>
<reference evidence="8 9 10" key="1">
    <citation type="journal article" date="2010" name="Science">
        <title>The structure of cbb3 cytochrome oxidase provides insights into proton pumping.</title>
        <authorList>
            <person name="Buschmann S."/>
            <person name="Warkentin E."/>
            <person name="Xie H."/>
            <person name="Langer J.D."/>
            <person name="Ermler U."/>
            <person name="Michel H."/>
        </authorList>
    </citation>
    <scope>NUCLEOTIDE SEQUENCE [GENOMIC DNA]</scope>
    <scope>PROTEIN SEQUENCE OF 30-58; 82-97; 110-133; 183-199; 260-267 AND 300-311</scope>
    <scope>COFACTOR</scope>
    <scope>SUBUNIT</scope>
    <scope>X-RAY CRYSTALLOGRAPHY (3.20 ANGSTROMS) IN COMPLEX WITH HEME C</scope>
    <scope>IDENTIFICATION BY MASS SPECTROMETRY</scope>
    <source>
        <strain evidence="9">ATCC 14405 / JCM 20778 / CIP 107696 / IAM 12931 / LMG 2243 / NCIMB 568 / Baumann 218 / ZoBell 632</strain>
    </source>
</reference>
<protein>
    <recommendedName>
        <fullName evidence="2 10">Cbb3-type cytochrome c oxidase subunit CcoP1</fullName>
        <shortName evidence="2">Cbb3-Cox subunit CcoP1</shortName>
    </recommendedName>
    <alternativeName>
        <fullName evidence="3">C-type cytochrome CcoP1</fullName>
        <shortName evidence="2">Cyt c(P1)</shortName>
    </alternativeName>
    <alternativeName>
        <fullName evidence="2 9">Cytochrome c oxidase subunit III</fullName>
    </alternativeName>
</protein>